<reference key="1">
    <citation type="journal article" date="2010" name="Genome Biol. Evol.">
        <title>Continuing evolution of Burkholderia mallei through genome reduction and large-scale rearrangements.</title>
        <authorList>
            <person name="Losada L."/>
            <person name="Ronning C.M."/>
            <person name="DeShazer D."/>
            <person name="Woods D."/>
            <person name="Fedorova N."/>
            <person name="Kim H.S."/>
            <person name="Shabalina S.A."/>
            <person name="Pearson T.R."/>
            <person name="Brinkac L."/>
            <person name="Tan P."/>
            <person name="Nandi T."/>
            <person name="Crabtree J."/>
            <person name="Badger J."/>
            <person name="Beckstrom-Sternberg S."/>
            <person name="Saqib M."/>
            <person name="Schutzer S.E."/>
            <person name="Keim P."/>
            <person name="Nierman W.C."/>
        </authorList>
    </citation>
    <scope>NUCLEOTIDE SEQUENCE [LARGE SCALE GENOMIC DNA]</scope>
    <source>
        <strain>1106a</strain>
    </source>
</reference>
<keyword id="KW-0067">ATP-binding</keyword>
<keyword id="KW-0460">Magnesium</keyword>
<keyword id="KW-0464">Manganese</keyword>
<keyword id="KW-0479">Metal-binding</keyword>
<keyword id="KW-0547">Nucleotide-binding</keyword>
<keyword id="KW-0548">Nucleotidyltransferase</keyword>
<keyword id="KW-0808">Transferase</keyword>
<protein>
    <recommendedName>
        <fullName evidence="1">Protein nucleotidyltransferase YdiU</fullName>
        <ecNumber evidence="1">2.7.7.-</ecNumber>
    </recommendedName>
    <alternativeName>
        <fullName evidence="1">Protein adenylyltransferase YdiU</fullName>
        <ecNumber evidence="1">2.7.7.108</ecNumber>
    </alternativeName>
    <alternativeName>
        <fullName evidence="1">Protein uridylyltransferase YdiU</fullName>
        <ecNumber evidence="1">2.7.7.-</ecNumber>
    </alternativeName>
</protein>
<gene>
    <name evidence="1" type="primary">ydiU</name>
    <name evidence="1" type="synonym">selO</name>
    <name type="ordered locus">BURPS1106A_2336</name>
</gene>
<comment type="function">
    <text evidence="1">Nucleotidyltransferase involved in the post-translational modification of proteins. It can catalyze the addition of adenosine monophosphate (AMP) or uridine monophosphate (UMP) to a protein, resulting in modifications known as AMPylation and UMPylation.</text>
</comment>
<comment type="catalytic activity">
    <reaction evidence="1">
        <text>L-seryl-[protein] + ATP = 3-O-(5'-adenylyl)-L-seryl-[protein] + diphosphate</text>
        <dbReference type="Rhea" id="RHEA:58120"/>
        <dbReference type="Rhea" id="RHEA-COMP:9863"/>
        <dbReference type="Rhea" id="RHEA-COMP:15073"/>
        <dbReference type="ChEBI" id="CHEBI:29999"/>
        <dbReference type="ChEBI" id="CHEBI:30616"/>
        <dbReference type="ChEBI" id="CHEBI:33019"/>
        <dbReference type="ChEBI" id="CHEBI:142516"/>
        <dbReference type="EC" id="2.7.7.108"/>
    </reaction>
</comment>
<comment type="catalytic activity">
    <reaction evidence="1">
        <text>L-threonyl-[protein] + ATP = 3-O-(5'-adenylyl)-L-threonyl-[protein] + diphosphate</text>
        <dbReference type="Rhea" id="RHEA:54292"/>
        <dbReference type="Rhea" id="RHEA-COMP:11060"/>
        <dbReference type="Rhea" id="RHEA-COMP:13847"/>
        <dbReference type="ChEBI" id="CHEBI:30013"/>
        <dbReference type="ChEBI" id="CHEBI:30616"/>
        <dbReference type="ChEBI" id="CHEBI:33019"/>
        <dbReference type="ChEBI" id="CHEBI:138113"/>
        <dbReference type="EC" id="2.7.7.108"/>
    </reaction>
</comment>
<comment type="catalytic activity">
    <reaction evidence="1">
        <text>L-tyrosyl-[protein] + ATP = O-(5'-adenylyl)-L-tyrosyl-[protein] + diphosphate</text>
        <dbReference type="Rhea" id="RHEA:54288"/>
        <dbReference type="Rhea" id="RHEA-COMP:10136"/>
        <dbReference type="Rhea" id="RHEA-COMP:13846"/>
        <dbReference type="ChEBI" id="CHEBI:30616"/>
        <dbReference type="ChEBI" id="CHEBI:33019"/>
        <dbReference type="ChEBI" id="CHEBI:46858"/>
        <dbReference type="ChEBI" id="CHEBI:83624"/>
        <dbReference type="EC" id="2.7.7.108"/>
    </reaction>
</comment>
<comment type="catalytic activity">
    <reaction evidence="1">
        <text>L-histidyl-[protein] + UTP = N(tele)-(5'-uridylyl)-L-histidyl-[protein] + diphosphate</text>
        <dbReference type="Rhea" id="RHEA:83891"/>
        <dbReference type="Rhea" id="RHEA-COMP:9745"/>
        <dbReference type="Rhea" id="RHEA-COMP:20239"/>
        <dbReference type="ChEBI" id="CHEBI:29979"/>
        <dbReference type="ChEBI" id="CHEBI:33019"/>
        <dbReference type="ChEBI" id="CHEBI:46398"/>
        <dbReference type="ChEBI" id="CHEBI:233474"/>
    </reaction>
</comment>
<comment type="catalytic activity">
    <reaction evidence="1">
        <text>L-seryl-[protein] + UTP = O-(5'-uridylyl)-L-seryl-[protein] + diphosphate</text>
        <dbReference type="Rhea" id="RHEA:64604"/>
        <dbReference type="Rhea" id="RHEA-COMP:9863"/>
        <dbReference type="Rhea" id="RHEA-COMP:16635"/>
        <dbReference type="ChEBI" id="CHEBI:29999"/>
        <dbReference type="ChEBI" id="CHEBI:33019"/>
        <dbReference type="ChEBI" id="CHEBI:46398"/>
        <dbReference type="ChEBI" id="CHEBI:156051"/>
    </reaction>
</comment>
<comment type="catalytic activity">
    <reaction evidence="1">
        <text>L-tyrosyl-[protein] + UTP = O-(5'-uridylyl)-L-tyrosyl-[protein] + diphosphate</text>
        <dbReference type="Rhea" id="RHEA:83887"/>
        <dbReference type="Rhea" id="RHEA-COMP:10136"/>
        <dbReference type="Rhea" id="RHEA-COMP:20238"/>
        <dbReference type="ChEBI" id="CHEBI:33019"/>
        <dbReference type="ChEBI" id="CHEBI:46398"/>
        <dbReference type="ChEBI" id="CHEBI:46858"/>
        <dbReference type="ChEBI" id="CHEBI:90602"/>
    </reaction>
</comment>
<comment type="cofactor">
    <cofactor evidence="1">
        <name>Mg(2+)</name>
        <dbReference type="ChEBI" id="CHEBI:18420"/>
    </cofactor>
    <cofactor evidence="1">
        <name>Mn(2+)</name>
        <dbReference type="ChEBI" id="CHEBI:29035"/>
    </cofactor>
</comment>
<comment type="similarity">
    <text evidence="1">Belongs to the SELO family.</text>
</comment>
<name>SELO_BURP0</name>
<evidence type="ECO:0000255" key="1">
    <source>
        <dbReference type="HAMAP-Rule" id="MF_00692"/>
    </source>
</evidence>
<organism>
    <name type="scientific">Burkholderia pseudomallei (strain 1106a)</name>
    <dbReference type="NCBI Taxonomy" id="357348"/>
    <lineage>
        <taxon>Bacteria</taxon>
        <taxon>Pseudomonadati</taxon>
        <taxon>Pseudomonadota</taxon>
        <taxon>Betaproteobacteria</taxon>
        <taxon>Burkholderiales</taxon>
        <taxon>Burkholderiaceae</taxon>
        <taxon>Burkholderia</taxon>
        <taxon>pseudomallei group</taxon>
    </lineage>
</organism>
<sequence>MSFSRSEAAPAAPLPDLAATLAAPRDDAFQQLGAAFVTRLPAAPLPAPYVVGFSDDAARMLGLEPALRDAPGFAELFCGNPTRDWPQASLPYASVYSGHQFGVWAGQLGDGRALTIGELAHDGRRYELQLKGAGRTPYSRMGDGRAVLRSSIREFLCSEAMHHLGIPTTRALAVIGSDQPVVREEIETSAVVTRVAQSFVRFGHFEHFFANDRPEQLRALADHVIERFYPACRDADDPYLALLAEATRRTAELVAQWQAVGFCHGVMNTDNMSILGLTIDYGPFGFIDAFDAKHVCNHSDTQGRYAYRMQPRIAHWNCFCLAQALLPLIGLHRDAPSEDARAERAVEDAHAVLGRFPEQFGPALERAMRAKLGLALEREGDAALANQLLEIMDASHADFTLTFRHLARVSKHDARGDAPVRDLFIDRDAFDRWANLYRARLSEEARDDASRAAAMNRVNPKYVLRNHLAETAIRRAKEKDFSEVERLAAVLRRPFDEQLEHDAYAALPPDWASTLEVSCSS</sequence>
<proteinExistence type="inferred from homology"/>
<accession>A3NW79</accession>
<feature type="chain" id="PRO_1000045244" description="Protein nucleotidyltransferase YdiU">
    <location>
        <begin position="1"/>
        <end position="521"/>
    </location>
</feature>
<feature type="active site" description="Proton acceptor" evidence="1">
    <location>
        <position position="270"/>
    </location>
</feature>
<feature type="binding site" evidence="1">
    <location>
        <position position="109"/>
    </location>
    <ligand>
        <name>ATP</name>
        <dbReference type="ChEBI" id="CHEBI:30616"/>
    </ligand>
</feature>
<feature type="binding site" evidence="1">
    <location>
        <position position="111"/>
    </location>
    <ligand>
        <name>ATP</name>
        <dbReference type="ChEBI" id="CHEBI:30616"/>
    </ligand>
</feature>
<feature type="binding site" evidence="1">
    <location>
        <position position="112"/>
    </location>
    <ligand>
        <name>ATP</name>
        <dbReference type="ChEBI" id="CHEBI:30616"/>
    </ligand>
</feature>
<feature type="binding site" evidence="1">
    <location>
        <position position="131"/>
    </location>
    <ligand>
        <name>ATP</name>
        <dbReference type="ChEBI" id="CHEBI:30616"/>
    </ligand>
</feature>
<feature type="binding site" evidence="1">
    <location>
        <position position="143"/>
    </location>
    <ligand>
        <name>ATP</name>
        <dbReference type="ChEBI" id="CHEBI:30616"/>
    </ligand>
</feature>
<feature type="binding site" evidence="1">
    <location>
        <position position="144"/>
    </location>
    <ligand>
        <name>ATP</name>
        <dbReference type="ChEBI" id="CHEBI:30616"/>
    </ligand>
</feature>
<feature type="binding site" evidence="1">
    <location>
        <position position="194"/>
    </location>
    <ligand>
        <name>ATP</name>
        <dbReference type="ChEBI" id="CHEBI:30616"/>
    </ligand>
</feature>
<feature type="binding site" evidence="1">
    <location>
        <position position="201"/>
    </location>
    <ligand>
        <name>ATP</name>
        <dbReference type="ChEBI" id="CHEBI:30616"/>
    </ligand>
</feature>
<feature type="binding site" evidence="1">
    <location>
        <position position="271"/>
    </location>
    <ligand>
        <name>Mg(2+)</name>
        <dbReference type="ChEBI" id="CHEBI:18420"/>
    </ligand>
</feature>
<feature type="binding site" evidence="1">
    <location>
        <position position="280"/>
    </location>
    <ligand>
        <name>ATP</name>
        <dbReference type="ChEBI" id="CHEBI:30616"/>
    </ligand>
</feature>
<feature type="binding site" evidence="1">
    <location>
        <position position="280"/>
    </location>
    <ligand>
        <name>Mg(2+)</name>
        <dbReference type="ChEBI" id="CHEBI:18420"/>
    </ligand>
</feature>
<dbReference type="EC" id="2.7.7.-" evidence="1"/>
<dbReference type="EC" id="2.7.7.108" evidence="1"/>
<dbReference type="EMBL" id="CP000572">
    <property type="protein sequence ID" value="ABN91447.1"/>
    <property type="molecule type" value="Genomic_DNA"/>
</dbReference>
<dbReference type="RefSeq" id="WP_004535942.1">
    <property type="nucleotide sequence ID" value="NC_009076.1"/>
</dbReference>
<dbReference type="SMR" id="A3NW79"/>
<dbReference type="KEGG" id="bpl:BURPS1106A_2336"/>
<dbReference type="HOGENOM" id="CLU_010245_4_0_4"/>
<dbReference type="Proteomes" id="UP000006738">
    <property type="component" value="Chromosome I"/>
</dbReference>
<dbReference type="GO" id="GO:0070733">
    <property type="term" value="F:AMPylase activity"/>
    <property type="evidence" value="ECO:0007669"/>
    <property type="project" value="RHEA"/>
</dbReference>
<dbReference type="GO" id="GO:0005524">
    <property type="term" value="F:ATP binding"/>
    <property type="evidence" value="ECO:0007669"/>
    <property type="project" value="UniProtKB-UniRule"/>
</dbReference>
<dbReference type="GO" id="GO:0000287">
    <property type="term" value="F:magnesium ion binding"/>
    <property type="evidence" value="ECO:0007669"/>
    <property type="project" value="UniProtKB-UniRule"/>
</dbReference>
<dbReference type="HAMAP" id="MF_00692">
    <property type="entry name" value="YdiU_SelO"/>
    <property type="match status" value="1"/>
</dbReference>
<dbReference type="InterPro" id="IPR003846">
    <property type="entry name" value="SelO"/>
</dbReference>
<dbReference type="NCBIfam" id="NF000658">
    <property type="entry name" value="PRK00029.1"/>
    <property type="match status" value="1"/>
</dbReference>
<dbReference type="PANTHER" id="PTHR32057">
    <property type="entry name" value="PROTEIN ADENYLYLTRANSFERASE SELO, MITOCHONDRIAL"/>
    <property type="match status" value="1"/>
</dbReference>
<dbReference type="PANTHER" id="PTHR32057:SF14">
    <property type="entry name" value="PROTEIN ADENYLYLTRANSFERASE SELO, MITOCHONDRIAL"/>
    <property type="match status" value="1"/>
</dbReference>
<dbReference type="Pfam" id="PF02696">
    <property type="entry name" value="SelO"/>
    <property type="match status" value="1"/>
</dbReference>